<name>DHH1_ASPNC</name>
<comment type="function">
    <text evidence="1">ATP-dependent RNA helicase involved in mRNA turnover, and more specifically in mRNA decapping. Is involved in G1/S DNA-damage checkpoint recovery, probably through the regulation of the translational status of a subset of mRNAs. May also have a role in translation and mRNA nuclear export (By similarity).</text>
</comment>
<comment type="catalytic activity">
    <reaction>
        <text>ATP + H2O = ADP + phosphate + H(+)</text>
        <dbReference type="Rhea" id="RHEA:13065"/>
        <dbReference type="ChEBI" id="CHEBI:15377"/>
        <dbReference type="ChEBI" id="CHEBI:15378"/>
        <dbReference type="ChEBI" id="CHEBI:30616"/>
        <dbReference type="ChEBI" id="CHEBI:43474"/>
        <dbReference type="ChEBI" id="CHEBI:456216"/>
        <dbReference type="EC" id="3.6.4.13"/>
    </reaction>
</comment>
<comment type="subcellular location">
    <subcellularLocation>
        <location evidence="1">Cytoplasm</location>
        <location evidence="1">P-body</location>
    </subcellularLocation>
    <text evidence="1">Is concentrated in several cytoplasmic foci called P bodies (or cytoplasmic processing bodies) which represent sites of mRNA decapping and 5' to 3' exonucleotidic decay.</text>
</comment>
<comment type="domain">
    <text>The Q motif is unique to and characteristic of the DEAD box family of RNA helicases and controls ATP binding and hydrolysis.</text>
</comment>
<comment type="similarity">
    <text evidence="5">Belongs to the DEAD box helicase family. DDX6/DHH1 subfamily.</text>
</comment>
<dbReference type="EC" id="3.6.4.13"/>
<dbReference type="EMBL" id="AM270257">
    <property type="protein sequence ID" value="CAK40919.1"/>
    <property type="molecule type" value="Genomic_DNA"/>
</dbReference>
<dbReference type="RefSeq" id="XP_001395078.1">
    <property type="nucleotide sequence ID" value="XM_001395041.2"/>
</dbReference>
<dbReference type="SMR" id="A2QY39"/>
<dbReference type="EnsemblFungi" id="CAK40919">
    <property type="protein sequence ID" value="CAK40919"/>
    <property type="gene ID" value="An11g11210"/>
</dbReference>
<dbReference type="GeneID" id="4985338"/>
<dbReference type="KEGG" id="ang:An11g11210"/>
<dbReference type="VEuPathDB" id="FungiDB:An11g11210"/>
<dbReference type="HOGENOM" id="CLU_003041_30_0_1"/>
<dbReference type="Proteomes" id="UP000006706">
    <property type="component" value="Chromosome 7R"/>
</dbReference>
<dbReference type="GO" id="GO:0000932">
    <property type="term" value="C:P-body"/>
    <property type="evidence" value="ECO:0007669"/>
    <property type="project" value="UniProtKB-SubCell"/>
</dbReference>
<dbReference type="GO" id="GO:0005524">
    <property type="term" value="F:ATP binding"/>
    <property type="evidence" value="ECO:0007669"/>
    <property type="project" value="UniProtKB-KW"/>
</dbReference>
<dbReference type="GO" id="GO:0016887">
    <property type="term" value="F:ATP hydrolysis activity"/>
    <property type="evidence" value="ECO:0007669"/>
    <property type="project" value="RHEA"/>
</dbReference>
<dbReference type="GO" id="GO:0003723">
    <property type="term" value="F:RNA binding"/>
    <property type="evidence" value="ECO:0007669"/>
    <property type="project" value="UniProtKB-KW"/>
</dbReference>
<dbReference type="GO" id="GO:0003724">
    <property type="term" value="F:RNA helicase activity"/>
    <property type="evidence" value="ECO:0007669"/>
    <property type="project" value="UniProtKB-EC"/>
</dbReference>
<dbReference type="GO" id="GO:0006397">
    <property type="term" value="P:mRNA processing"/>
    <property type="evidence" value="ECO:0007669"/>
    <property type="project" value="UniProtKB-KW"/>
</dbReference>
<dbReference type="GO" id="GO:0051028">
    <property type="term" value="P:mRNA transport"/>
    <property type="evidence" value="ECO:0007669"/>
    <property type="project" value="UniProtKB-KW"/>
</dbReference>
<dbReference type="GO" id="GO:0006417">
    <property type="term" value="P:regulation of translation"/>
    <property type="evidence" value="ECO:0007669"/>
    <property type="project" value="UniProtKB-KW"/>
</dbReference>
<dbReference type="CDD" id="cd17940">
    <property type="entry name" value="DEADc_DDX6"/>
    <property type="match status" value="1"/>
</dbReference>
<dbReference type="CDD" id="cd18787">
    <property type="entry name" value="SF2_C_DEAD"/>
    <property type="match status" value="1"/>
</dbReference>
<dbReference type="FunFam" id="3.40.50.300:FF:000114">
    <property type="entry name" value="ATP-dependent RNA helicase DDX6"/>
    <property type="match status" value="1"/>
</dbReference>
<dbReference type="FunFam" id="3.40.50.300:FF:000364">
    <property type="entry name" value="ATP-dependent RNA helicase DDX6"/>
    <property type="match status" value="1"/>
</dbReference>
<dbReference type="Gene3D" id="3.40.50.300">
    <property type="entry name" value="P-loop containing nucleotide triphosphate hydrolases"/>
    <property type="match status" value="2"/>
</dbReference>
<dbReference type="InterPro" id="IPR011545">
    <property type="entry name" value="DEAD/DEAH_box_helicase_dom"/>
</dbReference>
<dbReference type="InterPro" id="IPR014001">
    <property type="entry name" value="Helicase_ATP-bd"/>
</dbReference>
<dbReference type="InterPro" id="IPR001650">
    <property type="entry name" value="Helicase_C-like"/>
</dbReference>
<dbReference type="InterPro" id="IPR027417">
    <property type="entry name" value="P-loop_NTPase"/>
</dbReference>
<dbReference type="InterPro" id="IPR000629">
    <property type="entry name" value="RNA-helicase_DEAD-box_CS"/>
</dbReference>
<dbReference type="InterPro" id="IPR014014">
    <property type="entry name" value="RNA_helicase_DEAD_Q_motif"/>
</dbReference>
<dbReference type="PANTHER" id="PTHR47960">
    <property type="entry name" value="DEAD-BOX ATP-DEPENDENT RNA HELICASE 50"/>
    <property type="match status" value="1"/>
</dbReference>
<dbReference type="Pfam" id="PF00270">
    <property type="entry name" value="DEAD"/>
    <property type="match status" value="1"/>
</dbReference>
<dbReference type="Pfam" id="PF00271">
    <property type="entry name" value="Helicase_C"/>
    <property type="match status" value="1"/>
</dbReference>
<dbReference type="SMART" id="SM00487">
    <property type="entry name" value="DEXDc"/>
    <property type="match status" value="1"/>
</dbReference>
<dbReference type="SMART" id="SM00490">
    <property type="entry name" value="HELICc"/>
    <property type="match status" value="1"/>
</dbReference>
<dbReference type="SUPFAM" id="SSF52540">
    <property type="entry name" value="P-loop containing nucleoside triphosphate hydrolases"/>
    <property type="match status" value="1"/>
</dbReference>
<dbReference type="PROSITE" id="PS00039">
    <property type="entry name" value="DEAD_ATP_HELICASE"/>
    <property type="match status" value="1"/>
</dbReference>
<dbReference type="PROSITE" id="PS51192">
    <property type="entry name" value="HELICASE_ATP_BIND_1"/>
    <property type="match status" value="1"/>
</dbReference>
<dbReference type="PROSITE" id="PS51194">
    <property type="entry name" value="HELICASE_CTER"/>
    <property type="match status" value="1"/>
</dbReference>
<dbReference type="PROSITE" id="PS51195">
    <property type="entry name" value="Q_MOTIF"/>
    <property type="match status" value="1"/>
</dbReference>
<sequence>MTDALASQLNNTTLGDASSDAKWKEQLNVPAKDARPQTEDVTATKGLEFEDFYIKRELMMGIFEAGFEKPSPIQEETIPVALTGRDILARAKNGTGKTAAFVIPTLERINPKSTKTQALILVPTRELALQTSHVCKTLGKHLGINVMVTTGGTGLMDDIIRLNDAVHILVGTPGRVLDLASKGVADLSECPTFVMDEADKLLSPEFTPVIEQLLSFHPKDRQVMLFSATFPLIVKSFKDKHMRNPYEINLMDELTLRGITQYYAFVEEKQKVHCLNTLFSKLQINQSIIFCNSTNRVELLAKKITELGYSCFYSHARMLQQHRNRVFHDFRNGVCRNLVCSDLLTRGIDIQAVNVVINFDFPKNAETYLHRIGRSGRFGHLGLAINLINWEDRFNLYKIEQELGTEIQPIPQNIDKKLYVYDSPDTIPRPIANPSQPQITAQAANANIGERRHNHHMNGGQYQYGRGRGSYRGGRGQGQRRNMQNETKFGTQGQSSGKSHPTQVS</sequence>
<proteinExistence type="inferred from homology"/>
<reference key="1">
    <citation type="journal article" date="2007" name="Nat. Biotechnol.">
        <title>Genome sequencing and analysis of the versatile cell factory Aspergillus niger CBS 513.88.</title>
        <authorList>
            <person name="Pel H.J."/>
            <person name="de Winde J.H."/>
            <person name="Archer D.B."/>
            <person name="Dyer P.S."/>
            <person name="Hofmann G."/>
            <person name="Schaap P.J."/>
            <person name="Turner G."/>
            <person name="de Vries R.P."/>
            <person name="Albang R."/>
            <person name="Albermann K."/>
            <person name="Andersen M.R."/>
            <person name="Bendtsen J.D."/>
            <person name="Benen J.A.E."/>
            <person name="van den Berg M."/>
            <person name="Breestraat S."/>
            <person name="Caddick M.X."/>
            <person name="Contreras R."/>
            <person name="Cornell M."/>
            <person name="Coutinho P.M."/>
            <person name="Danchin E.G.J."/>
            <person name="Debets A.J.M."/>
            <person name="Dekker P."/>
            <person name="van Dijck P.W.M."/>
            <person name="van Dijk A."/>
            <person name="Dijkhuizen L."/>
            <person name="Driessen A.J.M."/>
            <person name="d'Enfert C."/>
            <person name="Geysens S."/>
            <person name="Goosen C."/>
            <person name="Groot G.S.P."/>
            <person name="de Groot P.W.J."/>
            <person name="Guillemette T."/>
            <person name="Henrissat B."/>
            <person name="Herweijer M."/>
            <person name="van den Hombergh J.P.T.W."/>
            <person name="van den Hondel C.A.M.J.J."/>
            <person name="van der Heijden R.T.J.M."/>
            <person name="van der Kaaij R.M."/>
            <person name="Klis F.M."/>
            <person name="Kools H.J."/>
            <person name="Kubicek C.P."/>
            <person name="van Kuyk P.A."/>
            <person name="Lauber J."/>
            <person name="Lu X."/>
            <person name="van der Maarel M.J.E.C."/>
            <person name="Meulenberg R."/>
            <person name="Menke H."/>
            <person name="Mortimer M.A."/>
            <person name="Nielsen J."/>
            <person name="Oliver S.G."/>
            <person name="Olsthoorn M."/>
            <person name="Pal K."/>
            <person name="van Peij N.N.M.E."/>
            <person name="Ram A.F.J."/>
            <person name="Rinas U."/>
            <person name="Roubos J.A."/>
            <person name="Sagt C.M.J."/>
            <person name="Schmoll M."/>
            <person name="Sun J."/>
            <person name="Ussery D."/>
            <person name="Varga J."/>
            <person name="Vervecken W."/>
            <person name="van de Vondervoort P.J.J."/>
            <person name="Wedler H."/>
            <person name="Woesten H.A.B."/>
            <person name="Zeng A.-P."/>
            <person name="van Ooyen A.J.J."/>
            <person name="Visser J."/>
            <person name="Stam H."/>
        </authorList>
    </citation>
    <scope>NUCLEOTIDE SEQUENCE [LARGE SCALE GENOMIC DNA]</scope>
    <source>
        <strain>ATCC MYA-4892 / CBS 513.88 / FGSC A1513</strain>
    </source>
</reference>
<organism>
    <name type="scientific">Aspergillus niger (strain ATCC MYA-4892 / CBS 513.88 / FGSC A1513)</name>
    <dbReference type="NCBI Taxonomy" id="425011"/>
    <lineage>
        <taxon>Eukaryota</taxon>
        <taxon>Fungi</taxon>
        <taxon>Dikarya</taxon>
        <taxon>Ascomycota</taxon>
        <taxon>Pezizomycotina</taxon>
        <taxon>Eurotiomycetes</taxon>
        <taxon>Eurotiomycetidae</taxon>
        <taxon>Eurotiales</taxon>
        <taxon>Aspergillaceae</taxon>
        <taxon>Aspergillus</taxon>
        <taxon>Aspergillus subgen. Circumdati</taxon>
    </lineage>
</organism>
<feature type="chain" id="PRO_0000282462" description="ATP-dependent RNA helicase dhh1">
    <location>
        <begin position="1"/>
        <end position="505"/>
    </location>
</feature>
<feature type="domain" description="Helicase ATP-binding" evidence="2">
    <location>
        <begin position="78"/>
        <end position="248"/>
    </location>
</feature>
<feature type="domain" description="Helicase C-terminal" evidence="3">
    <location>
        <begin position="258"/>
        <end position="418"/>
    </location>
</feature>
<feature type="region of interest" description="Disordered" evidence="4">
    <location>
        <begin position="450"/>
        <end position="505"/>
    </location>
</feature>
<feature type="short sequence motif" description="Q motif">
    <location>
        <begin position="47"/>
        <end position="75"/>
    </location>
</feature>
<feature type="short sequence motif" description="DEAD box">
    <location>
        <begin position="196"/>
        <end position="199"/>
    </location>
</feature>
<feature type="compositionally biased region" description="Gly residues" evidence="4">
    <location>
        <begin position="466"/>
        <end position="477"/>
    </location>
</feature>
<feature type="compositionally biased region" description="Polar residues" evidence="4">
    <location>
        <begin position="482"/>
        <end position="505"/>
    </location>
</feature>
<feature type="binding site" evidence="2">
    <location>
        <begin position="91"/>
        <end position="98"/>
    </location>
    <ligand>
        <name>ATP</name>
        <dbReference type="ChEBI" id="CHEBI:30616"/>
    </ligand>
</feature>
<accession>A2QY39</accession>
<evidence type="ECO:0000250" key="1"/>
<evidence type="ECO:0000255" key="2">
    <source>
        <dbReference type="PROSITE-ProRule" id="PRU00541"/>
    </source>
</evidence>
<evidence type="ECO:0000255" key="3">
    <source>
        <dbReference type="PROSITE-ProRule" id="PRU00542"/>
    </source>
</evidence>
<evidence type="ECO:0000256" key="4">
    <source>
        <dbReference type="SAM" id="MobiDB-lite"/>
    </source>
</evidence>
<evidence type="ECO:0000305" key="5"/>
<gene>
    <name type="primary">dhh1</name>
    <name type="ORF">An11g11210</name>
</gene>
<keyword id="KW-0067">ATP-binding</keyword>
<keyword id="KW-0963">Cytoplasm</keyword>
<keyword id="KW-0347">Helicase</keyword>
<keyword id="KW-0378">Hydrolase</keyword>
<keyword id="KW-0507">mRNA processing</keyword>
<keyword id="KW-0509">mRNA transport</keyword>
<keyword id="KW-0547">Nucleotide-binding</keyword>
<keyword id="KW-1185">Reference proteome</keyword>
<keyword id="KW-0694">RNA-binding</keyword>
<keyword id="KW-0810">Translation regulation</keyword>
<keyword id="KW-0813">Transport</keyword>
<protein>
    <recommendedName>
        <fullName>ATP-dependent RNA helicase dhh1</fullName>
        <ecNumber>3.6.4.13</ecNumber>
    </recommendedName>
</protein>